<accession>Q8KF11</accession>
<dbReference type="EC" id="4.2.1.20" evidence="1"/>
<dbReference type="EMBL" id="AE006470">
    <property type="protein sequence ID" value="AAM71763.1"/>
    <property type="molecule type" value="Genomic_DNA"/>
</dbReference>
<dbReference type="RefSeq" id="NP_661421.1">
    <property type="nucleotide sequence ID" value="NC_002932.3"/>
</dbReference>
<dbReference type="RefSeq" id="WP_010932208.1">
    <property type="nucleotide sequence ID" value="NC_002932.3"/>
</dbReference>
<dbReference type="SMR" id="Q8KF11"/>
<dbReference type="STRING" id="194439.CT0521"/>
<dbReference type="EnsemblBacteria" id="AAM71763">
    <property type="protein sequence ID" value="AAM71763"/>
    <property type="gene ID" value="CT0521"/>
</dbReference>
<dbReference type="KEGG" id="cte:CT0521"/>
<dbReference type="PATRIC" id="fig|194439.7.peg.491"/>
<dbReference type="eggNOG" id="COG0133">
    <property type="taxonomic scope" value="Bacteria"/>
</dbReference>
<dbReference type="HOGENOM" id="CLU_016734_3_1_10"/>
<dbReference type="OrthoDB" id="9766131at2"/>
<dbReference type="UniPathway" id="UPA00035">
    <property type="reaction ID" value="UER00044"/>
</dbReference>
<dbReference type="Proteomes" id="UP000001007">
    <property type="component" value="Chromosome"/>
</dbReference>
<dbReference type="GO" id="GO:0005737">
    <property type="term" value="C:cytoplasm"/>
    <property type="evidence" value="ECO:0007669"/>
    <property type="project" value="TreeGrafter"/>
</dbReference>
<dbReference type="GO" id="GO:0004834">
    <property type="term" value="F:tryptophan synthase activity"/>
    <property type="evidence" value="ECO:0007669"/>
    <property type="project" value="UniProtKB-UniRule"/>
</dbReference>
<dbReference type="CDD" id="cd06446">
    <property type="entry name" value="Trp-synth_B"/>
    <property type="match status" value="1"/>
</dbReference>
<dbReference type="FunFam" id="3.40.50.1100:FF:000001">
    <property type="entry name" value="Tryptophan synthase beta chain"/>
    <property type="match status" value="1"/>
</dbReference>
<dbReference type="FunFam" id="3.40.50.1100:FF:000004">
    <property type="entry name" value="Tryptophan synthase beta chain"/>
    <property type="match status" value="1"/>
</dbReference>
<dbReference type="Gene3D" id="3.40.50.1100">
    <property type="match status" value="2"/>
</dbReference>
<dbReference type="HAMAP" id="MF_00133">
    <property type="entry name" value="Trp_synth_beta"/>
    <property type="match status" value="1"/>
</dbReference>
<dbReference type="InterPro" id="IPR006653">
    <property type="entry name" value="Trp_synth_b_CS"/>
</dbReference>
<dbReference type="InterPro" id="IPR006654">
    <property type="entry name" value="Trp_synth_beta"/>
</dbReference>
<dbReference type="InterPro" id="IPR023026">
    <property type="entry name" value="Trp_synth_beta/beta-like"/>
</dbReference>
<dbReference type="InterPro" id="IPR001926">
    <property type="entry name" value="TrpB-like_PALP"/>
</dbReference>
<dbReference type="InterPro" id="IPR036052">
    <property type="entry name" value="TrpB-like_PALP_sf"/>
</dbReference>
<dbReference type="NCBIfam" id="TIGR00263">
    <property type="entry name" value="trpB"/>
    <property type="match status" value="1"/>
</dbReference>
<dbReference type="PANTHER" id="PTHR48077:SF3">
    <property type="entry name" value="TRYPTOPHAN SYNTHASE"/>
    <property type="match status" value="1"/>
</dbReference>
<dbReference type="PANTHER" id="PTHR48077">
    <property type="entry name" value="TRYPTOPHAN SYNTHASE-RELATED"/>
    <property type="match status" value="1"/>
</dbReference>
<dbReference type="Pfam" id="PF00291">
    <property type="entry name" value="PALP"/>
    <property type="match status" value="1"/>
</dbReference>
<dbReference type="PIRSF" id="PIRSF001413">
    <property type="entry name" value="Trp_syn_beta"/>
    <property type="match status" value="1"/>
</dbReference>
<dbReference type="SUPFAM" id="SSF53686">
    <property type="entry name" value="Tryptophan synthase beta subunit-like PLP-dependent enzymes"/>
    <property type="match status" value="1"/>
</dbReference>
<dbReference type="PROSITE" id="PS00168">
    <property type="entry name" value="TRP_SYNTHASE_BETA"/>
    <property type="match status" value="1"/>
</dbReference>
<name>TRPB_CHLTE</name>
<sequence>MKQKVIYSAPDEFGHFGTFGGKFIPETLVKNAADLEEEYLKAKNDPEFHQTLDNLLRHYVGRPTPLYHASRLSEKQGGAQIWLKREDLCHTGAHKINNALGQVLLAKRMGKKRIIAETGAGQHGVATATVCALFGLDCIVYMGEEDIRRQAPNVARMKLLGTEVRPVTAGSRTLKDATSEAIRDWMNNPEETFYIVGSVIGMHPYPMMVRDFQSVIGRETRQQVLDQAGRLPDVIVACVGGGSNAIGMFYEFLPDAKEVELIGVEAAGEGLEGKHAASLTKGEIGVLHGSMMKLLQDEYGQVQEAHSISAGLDYPGVGPEHCYLQKLGLVCYTSTTDKEALAALDALAKTEGIICALESAHAVHYAMKRAAEMPKESIIVVNLSGRGDKDMGTIMQELKL</sequence>
<comment type="function">
    <text evidence="1">The beta subunit is responsible for the synthesis of L-tryptophan from indole and L-serine.</text>
</comment>
<comment type="catalytic activity">
    <reaction evidence="1">
        <text>(1S,2R)-1-C-(indol-3-yl)glycerol 3-phosphate + L-serine = D-glyceraldehyde 3-phosphate + L-tryptophan + H2O</text>
        <dbReference type="Rhea" id="RHEA:10532"/>
        <dbReference type="ChEBI" id="CHEBI:15377"/>
        <dbReference type="ChEBI" id="CHEBI:33384"/>
        <dbReference type="ChEBI" id="CHEBI:57912"/>
        <dbReference type="ChEBI" id="CHEBI:58866"/>
        <dbReference type="ChEBI" id="CHEBI:59776"/>
        <dbReference type="EC" id="4.2.1.20"/>
    </reaction>
</comment>
<comment type="cofactor">
    <cofactor evidence="1">
        <name>pyridoxal 5'-phosphate</name>
        <dbReference type="ChEBI" id="CHEBI:597326"/>
    </cofactor>
</comment>
<comment type="pathway">
    <text evidence="1">Amino-acid biosynthesis; L-tryptophan biosynthesis; L-tryptophan from chorismate: step 5/5.</text>
</comment>
<comment type="subunit">
    <text evidence="1">Tetramer of two alpha and two beta chains.</text>
</comment>
<comment type="similarity">
    <text evidence="1">Belongs to the TrpB family.</text>
</comment>
<keyword id="KW-0028">Amino-acid biosynthesis</keyword>
<keyword id="KW-0057">Aromatic amino acid biosynthesis</keyword>
<keyword id="KW-0456">Lyase</keyword>
<keyword id="KW-0663">Pyridoxal phosphate</keyword>
<keyword id="KW-1185">Reference proteome</keyword>
<keyword id="KW-0822">Tryptophan biosynthesis</keyword>
<feature type="chain" id="PRO_0000098940" description="Tryptophan synthase beta chain">
    <location>
        <begin position="1"/>
        <end position="400"/>
    </location>
</feature>
<feature type="modified residue" description="N6-(pyridoxal phosphate)lysine" evidence="1">
    <location>
        <position position="95"/>
    </location>
</feature>
<protein>
    <recommendedName>
        <fullName evidence="1">Tryptophan synthase beta chain</fullName>
        <ecNumber evidence="1">4.2.1.20</ecNumber>
    </recommendedName>
</protein>
<proteinExistence type="inferred from homology"/>
<gene>
    <name evidence="1" type="primary">trpB-1</name>
    <name type="ordered locus">CT0521</name>
</gene>
<evidence type="ECO:0000255" key="1">
    <source>
        <dbReference type="HAMAP-Rule" id="MF_00133"/>
    </source>
</evidence>
<reference key="1">
    <citation type="journal article" date="2002" name="Proc. Natl. Acad. Sci. U.S.A.">
        <title>The complete genome sequence of Chlorobium tepidum TLS, a photosynthetic, anaerobic, green-sulfur bacterium.</title>
        <authorList>
            <person name="Eisen J.A."/>
            <person name="Nelson K.E."/>
            <person name="Paulsen I.T."/>
            <person name="Heidelberg J.F."/>
            <person name="Wu M."/>
            <person name="Dodson R.J."/>
            <person name="DeBoy R.T."/>
            <person name="Gwinn M.L."/>
            <person name="Nelson W.C."/>
            <person name="Haft D.H."/>
            <person name="Hickey E.K."/>
            <person name="Peterson J.D."/>
            <person name="Durkin A.S."/>
            <person name="Kolonay J.F."/>
            <person name="Yang F."/>
            <person name="Holt I.E."/>
            <person name="Umayam L.A."/>
            <person name="Mason T.M."/>
            <person name="Brenner M."/>
            <person name="Shea T.P."/>
            <person name="Parksey D.S."/>
            <person name="Nierman W.C."/>
            <person name="Feldblyum T.V."/>
            <person name="Hansen C.L."/>
            <person name="Craven M.B."/>
            <person name="Radune D."/>
            <person name="Vamathevan J.J."/>
            <person name="Khouri H.M."/>
            <person name="White O."/>
            <person name="Gruber T.M."/>
            <person name="Ketchum K.A."/>
            <person name="Venter J.C."/>
            <person name="Tettelin H."/>
            <person name="Bryant D.A."/>
            <person name="Fraser C.M."/>
        </authorList>
    </citation>
    <scope>NUCLEOTIDE SEQUENCE [LARGE SCALE GENOMIC DNA]</scope>
    <source>
        <strain>ATCC 49652 / DSM 12025 / NBRC 103806 / TLS</strain>
    </source>
</reference>
<organism>
    <name type="scientific">Chlorobaculum tepidum (strain ATCC 49652 / DSM 12025 / NBRC 103806 / TLS)</name>
    <name type="common">Chlorobium tepidum</name>
    <dbReference type="NCBI Taxonomy" id="194439"/>
    <lineage>
        <taxon>Bacteria</taxon>
        <taxon>Pseudomonadati</taxon>
        <taxon>Chlorobiota</taxon>
        <taxon>Chlorobiia</taxon>
        <taxon>Chlorobiales</taxon>
        <taxon>Chlorobiaceae</taxon>
        <taxon>Chlorobaculum</taxon>
    </lineage>
</organism>